<dbReference type="EC" id="6.1.1.14" evidence="1"/>
<dbReference type="EMBL" id="CP000238">
    <property type="protein sequence ID" value="ABF13850.1"/>
    <property type="molecule type" value="Genomic_DNA"/>
</dbReference>
<dbReference type="RefSeq" id="WP_011520355.1">
    <property type="nucleotide sequence ID" value="NC_007984.1"/>
</dbReference>
<dbReference type="SMR" id="Q1LTU2"/>
<dbReference type="STRING" id="374463.BCI_0160"/>
<dbReference type="KEGG" id="bci:BCI_0160"/>
<dbReference type="HOGENOM" id="CLU_007220_2_2_6"/>
<dbReference type="OrthoDB" id="9775440at2"/>
<dbReference type="Proteomes" id="UP000002427">
    <property type="component" value="Chromosome"/>
</dbReference>
<dbReference type="GO" id="GO:0005829">
    <property type="term" value="C:cytosol"/>
    <property type="evidence" value="ECO:0007669"/>
    <property type="project" value="TreeGrafter"/>
</dbReference>
<dbReference type="GO" id="GO:0004814">
    <property type="term" value="F:arginine-tRNA ligase activity"/>
    <property type="evidence" value="ECO:0007669"/>
    <property type="project" value="InterPro"/>
</dbReference>
<dbReference type="GO" id="GO:0005524">
    <property type="term" value="F:ATP binding"/>
    <property type="evidence" value="ECO:0007669"/>
    <property type="project" value="UniProtKB-UniRule"/>
</dbReference>
<dbReference type="GO" id="GO:0004820">
    <property type="term" value="F:glycine-tRNA ligase activity"/>
    <property type="evidence" value="ECO:0007669"/>
    <property type="project" value="UniProtKB-UniRule"/>
</dbReference>
<dbReference type="GO" id="GO:0006420">
    <property type="term" value="P:arginyl-tRNA aminoacylation"/>
    <property type="evidence" value="ECO:0007669"/>
    <property type="project" value="InterPro"/>
</dbReference>
<dbReference type="GO" id="GO:0006426">
    <property type="term" value="P:glycyl-tRNA aminoacylation"/>
    <property type="evidence" value="ECO:0007669"/>
    <property type="project" value="UniProtKB-UniRule"/>
</dbReference>
<dbReference type="HAMAP" id="MF_00255">
    <property type="entry name" value="Gly_tRNA_synth_beta"/>
    <property type="match status" value="1"/>
</dbReference>
<dbReference type="InterPro" id="IPR008909">
    <property type="entry name" value="DALR_anticod-bd"/>
</dbReference>
<dbReference type="InterPro" id="IPR015944">
    <property type="entry name" value="Gly-tRNA-synth_bsu"/>
</dbReference>
<dbReference type="InterPro" id="IPR006194">
    <property type="entry name" value="Gly-tRNA-synth_heterodimer"/>
</dbReference>
<dbReference type="NCBIfam" id="TIGR00211">
    <property type="entry name" value="glyS"/>
    <property type="match status" value="1"/>
</dbReference>
<dbReference type="PANTHER" id="PTHR30075:SF2">
    <property type="entry name" value="GLYCINE--TRNA LIGASE, CHLOROPLASTIC_MITOCHONDRIAL 2"/>
    <property type="match status" value="1"/>
</dbReference>
<dbReference type="PANTHER" id="PTHR30075">
    <property type="entry name" value="GLYCYL-TRNA SYNTHETASE"/>
    <property type="match status" value="1"/>
</dbReference>
<dbReference type="Pfam" id="PF05746">
    <property type="entry name" value="DALR_1"/>
    <property type="match status" value="1"/>
</dbReference>
<dbReference type="Pfam" id="PF02092">
    <property type="entry name" value="tRNA_synt_2f"/>
    <property type="match status" value="1"/>
</dbReference>
<dbReference type="PRINTS" id="PR01045">
    <property type="entry name" value="TRNASYNTHGB"/>
</dbReference>
<dbReference type="SUPFAM" id="SSF109604">
    <property type="entry name" value="HD-domain/PDEase-like"/>
    <property type="match status" value="1"/>
</dbReference>
<dbReference type="PROSITE" id="PS50861">
    <property type="entry name" value="AA_TRNA_LIGASE_II_GLYAB"/>
    <property type="match status" value="1"/>
</dbReference>
<accession>Q1LTU2</accession>
<comment type="catalytic activity">
    <reaction evidence="1">
        <text>tRNA(Gly) + glycine + ATP = glycyl-tRNA(Gly) + AMP + diphosphate</text>
        <dbReference type="Rhea" id="RHEA:16013"/>
        <dbReference type="Rhea" id="RHEA-COMP:9664"/>
        <dbReference type="Rhea" id="RHEA-COMP:9683"/>
        <dbReference type="ChEBI" id="CHEBI:30616"/>
        <dbReference type="ChEBI" id="CHEBI:33019"/>
        <dbReference type="ChEBI" id="CHEBI:57305"/>
        <dbReference type="ChEBI" id="CHEBI:78442"/>
        <dbReference type="ChEBI" id="CHEBI:78522"/>
        <dbReference type="ChEBI" id="CHEBI:456215"/>
        <dbReference type="EC" id="6.1.1.14"/>
    </reaction>
</comment>
<comment type="subunit">
    <text evidence="1">Tetramer of two alpha and two beta subunits.</text>
</comment>
<comment type="subcellular location">
    <subcellularLocation>
        <location evidence="1">Cytoplasm</location>
    </subcellularLocation>
</comment>
<comment type="similarity">
    <text evidence="1">Belongs to the class-II aminoacyl-tRNA synthetase family.</text>
</comment>
<protein>
    <recommendedName>
        <fullName evidence="1">Glycine--tRNA ligase beta subunit</fullName>
        <ecNumber evidence="1">6.1.1.14</ecNumber>
    </recommendedName>
    <alternativeName>
        <fullName evidence="1">Glycyl-tRNA synthetase beta subunit</fullName>
        <shortName evidence="1">GlyRS</shortName>
    </alternativeName>
</protein>
<gene>
    <name evidence="1" type="primary">glyS</name>
    <name type="ordered locus">BCI_0160</name>
</gene>
<evidence type="ECO:0000255" key="1">
    <source>
        <dbReference type="HAMAP-Rule" id="MF_00255"/>
    </source>
</evidence>
<sequence length="699" mass="80353">MKQHIFLVEIGTEELPAKELRRLAQYFTANFINELNANGINYNDINWFAAPRRLAIKVNSINSIPTKSYMEKRGPAINKAFDAEGKPTPAAIGWARNCGITVNQAERFTTDKGEWLIYRMLVETKPVQKLLCSMVYNALTKFSSLTKIMRWGEKNYKFIRPVRTITLLLDDLVIPGNIFGIDSNRIILGHRFMGESVISLLHADYYPNVLLERGRVIADYELRKDTIRRNIEIMVKKIGGFTKINDKLLEEVTSLVDWPIVLTASFNANFLRIPAEALIYTMENNQKYFPVYDAKGKLLPYFIFVTNIESTNTNQIVVGNEKVMRSRLADVEFFFNIDRKQKLEDYLLLLGQVKFQMELGTLLDKSYRLEILASWIAEIISTDIKQAARAALISKCDLMTQMVFEYPEIQGIIGMHYATLDGETELVALAQKEQYLPLFSGDNLPTTLVSCAVSIADKMDNLAGIFGINQQYTKQANDPLALRRAALGILRIIIEKQLPIDLLSLIDKAVFLYNKKLTNTIVVEQIIHFMLNRLLSWYKKQGYSIDTINAVMAVYKPTGKLIHFDARLRAVHYLRQIPHAENLTKRIFNIIAKHKDLINGEVNFTLLKQPEEVILINSITQLHKKLILFFEKGKYQEALWELINLREIINTFFSKIIIMTENKELCINRLNIINKVRQLFLIIADFSLLQCSKEKSNVD</sequence>
<name>SYGB_BAUCH</name>
<reference key="1">
    <citation type="journal article" date="2006" name="PLoS Biol.">
        <title>Metabolic complementarity and genomics of the dual bacterial symbiosis of sharpshooters.</title>
        <authorList>
            <person name="Wu D."/>
            <person name="Daugherty S.C."/>
            <person name="Van Aken S.E."/>
            <person name="Pai G.H."/>
            <person name="Watkins K.L."/>
            <person name="Khouri H."/>
            <person name="Tallon L.J."/>
            <person name="Zaborsky J.M."/>
            <person name="Dunbar H.E."/>
            <person name="Tran P.L."/>
            <person name="Moran N.A."/>
            <person name="Eisen J.A."/>
        </authorList>
    </citation>
    <scope>NUCLEOTIDE SEQUENCE [LARGE SCALE GENOMIC DNA]</scope>
</reference>
<keyword id="KW-0030">Aminoacyl-tRNA synthetase</keyword>
<keyword id="KW-0067">ATP-binding</keyword>
<keyword id="KW-0963">Cytoplasm</keyword>
<keyword id="KW-0436">Ligase</keyword>
<keyword id="KW-0547">Nucleotide-binding</keyword>
<keyword id="KW-0648">Protein biosynthesis</keyword>
<keyword id="KW-1185">Reference proteome</keyword>
<feature type="chain" id="PRO_1000101265" description="Glycine--tRNA ligase beta subunit">
    <location>
        <begin position="1"/>
        <end position="699"/>
    </location>
</feature>
<organism>
    <name type="scientific">Baumannia cicadellinicola subsp. Homalodisca coagulata</name>
    <dbReference type="NCBI Taxonomy" id="374463"/>
    <lineage>
        <taxon>Bacteria</taxon>
        <taxon>Pseudomonadati</taxon>
        <taxon>Pseudomonadota</taxon>
        <taxon>Gammaproteobacteria</taxon>
        <taxon>Candidatus Palibaumannia</taxon>
    </lineage>
</organism>
<proteinExistence type="inferred from homology"/>